<name>FAHA_ASPFU</name>
<evidence type="ECO:0000250" key="1">
    <source>
        <dbReference type="UniProtKB" id="P35505"/>
    </source>
</evidence>
<evidence type="ECO:0000250" key="2">
    <source>
        <dbReference type="UniProtKB" id="Q00770"/>
    </source>
</evidence>
<evidence type="ECO:0000256" key="3">
    <source>
        <dbReference type="SAM" id="MobiDB-lite"/>
    </source>
</evidence>
<evidence type="ECO:0000269" key="4">
    <source>
    </source>
</evidence>
<evidence type="ECO:0000269" key="5">
    <source>
    </source>
</evidence>
<evidence type="ECO:0000269" key="6">
    <source>
    </source>
</evidence>
<evidence type="ECO:0000303" key="7">
    <source>
    </source>
</evidence>
<evidence type="ECO:0000305" key="8"/>
<evidence type="ECO:0000305" key="9">
    <source>
    </source>
</evidence>
<sequence>MASWLQIPKNSPFSLANIPFGIISSAKITSPVAAVAVGDYALNLSIFASSGGFSQLPVIQPHLGVFSQPTLNAFAALGRPVHRQVREYIQSVFRADTPFPQILKDNSTLQKEALLPLSEVTNHLPMHIGDYTDFYAGLNHAYNVGVLFRGPENALQPNYKHLPVGYHGRASSVVTSGTPIRRPNGQILANPAANPKVPTFSPCKRLDIELELAAFVSKSNELGKPVSIDEAEDHIFGVVLMNDWSARDIQAWEYVPLGPFNAKNFATTITPWVVLLDALEPFRTAGLEPGNRESLLPYLREKRELNAYDIPLEVEITNAGGKPTLISRTNAKNLLYSFPQMLAHHTITGCNMNTGDLLGSGTISGKENQTQGSLLEQTNGKNPLKLADGSERLFLEDGDTVVLRGMAGTEGNYVGFGDCVGTILPALKLEF</sequence>
<proteinExistence type="evidence at transcript level"/>
<keyword id="KW-0106">Calcium</keyword>
<keyword id="KW-0378">Hydrolase</keyword>
<keyword id="KW-0460">Magnesium</keyword>
<keyword id="KW-0479">Metal-binding</keyword>
<keyword id="KW-0585">Phenylalanine catabolism</keyword>
<keyword id="KW-1185">Reference proteome</keyword>
<keyword id="KW-0828">Tyrosine catabolism</keyword>
<feature type="chain" id="PRO_0000453191" description="Fumarylacetoacetase fahA">
    <location>
        <begin position="1"/>
        <end position="431"/>
    </location>
</feature>
<feature type="region of interest" description="Disordered" evidence="3">
    <location>
        <begin position="362"/>
        <end position="382"/>
    </location>
</feature>
<feature type="compositionally biased region" description="Polar residues" evidence="3">
    <location>
        <begin position="362"/>
        <end position="381"/>
    </location>
</feature>
<feature type="active site" description="Proton acceptor" evidence="2">
    <location>
        <position position="140"/>
    </location>
</feature>
<feature type="binding site" evidence="1">
    <location>
        <position position="133"/>
    </location>
    <ligand>
        <name>Ca(2+)</name>
        <dbReference type="ChEBI" id="CHEBI:29108"/>
    </ligand>
</feature>
<feature type="binding site" evidence="1">
    <location>
        <position position="135"/>
    </location>
    <ligand>
        <name>substrate</name>
    </ligand>
</feature>
<feature type="binding site" evidence="1">
    <location>
        <position position="149"/>
    </location>
    <ligand>
        <name>substrate</name>
    </ligand>
</feature>
<feature type="binding site" evidence="1">
    <location>
        <position position="209"/>
    </location>
    <ligand>
        <name>Ca(2+)</name>
        <dbReference type="ChEBI" id="CHEBI:29108"/>
    </ligand>
</feature>
<feature type="binding site" evidence="1">
    <location>
        <position position="211"/>
    </location>
    <ligand>
        <name>Ca(2+)</name>
        <dbReference type="ChEBI" id="CHEBI:29108"/>
    </ligand>
</feature>
<feature type="binding site" evidence="1">
    <location>
        <position position="243"/>
    </location>
    <ligand>
        <name>Ca(2+)</name>
        <dbReference type="ChEBI" id="CHEBI:29108"/>
    </ligand>
</feature>
<feature type="binding site" evidence="1">
    <location>
        <position position="243"/>
    </location>
    <ligand>
        <name>Mg(2+)</name>
        <dbReference type="ChEBI" id="CHEBI:18420"/>
    </ligand>
</feature>
<feature type="binding site" evidence="1">
    <location>
        <position position="250"/>
    </location>
    <ligand>
        <name>substrate</name>
    </ligand>
</feature>
<feature type="binding site" evidence="1">
    <location>
        <position position="254"/>
    </location>
    <ligand>
        <name>substrate</name>
    </ligand>
</feature>
<feature type="binding site" evidence="1">
    <location>
        <position position="263"/>
    </location>
    <ligand>
        <name>Mg(2+)</name>
        <dbReference type="ChEBI" id="CHEBI:18420"/>
    </ligand>
</feature>
<feature type="binding site" evidence="1">
    <location>
        <position position="267"/>
    </location>
    <ligand>
        <name>Mg(2+)</name>
        <dbReference type="ChEBI" id="CHEBI:18420"/>
    </ligand>
</feature>
<feature type="binding site" evidence="1">
    <location>
        <position position="362"/>
    </location>
    <ligand>
        <name>substrate</name>
    </ligand>
</feature>
<organism>
    <name type="scientific">Aspergillus fumigatus (strain ATCC MYA-4609 / CBS 101355 / FGSC A1100 / Af293)</name>
    <name type="common">Neosartorya fumigata</name>
    <dbReference type="NCBI Taxonomy" id="330879"/>
    <lineage>
        <taxon>Eukaryota</taxon>
        <taxon>Fungi</taxon>
        <taxon>Dikarya</taxon>
        <taxon>Ascomycota</taxon>
        <taxon>Pezizomycotina</taxon>
        <taxon>Eurotiomycetes</taxon>
        <taxon>Eurotiomycetidae</taxon>
        <taxon>Eurotiales</taxon>
        <taxon>Aspergillaceae</taxon>
        <taxon>Aspergillus</taxon>
        <taxon>Aspergillus subgen. Fumigati</taxon>
    </lineage>
</organism>
<accession>Q4WHT8</accession>
<protein>
    <recommendedName>
        <fullName evidence="7">Fumarylacetoacetase fahA</fullName>
        <ecNumber evidence="9">3.7.1.2</ecNumber>
    </recommendedName>
    <alternativeName>
        <fullName evidence="7">Fumarylacetoacetate hydrolase fahA</fullName>
    </alternativeName>
    <alternativeName>
        <fullName evidence="7">L-tyrosine degradation gene cluster protein fahA</fullName>
    </alternativeName>
    <alternativeName>
        <fullName evidence="7">Pyomelanin biosynthesis cluster protein fahA</fullName>
    </alternativeName>
</protein>
<dbReference type="EC" id="3.7.1.2" evidence="9"/>
<dbReference type="EMBL" id="AAHF01000008">
    <property type="protein sequence ID" value="EAL87517.1"/>
    <property type="molecule type" value="Genomic_DNA"/>
</dbReference>
<dbReference type="RefSeq" id="XP_749555.1">
    <property type="nucleotide sequence ID" value="XM_744462.1"/>
</dbReference>
<dbReference type="SMR" id="Q4WHT8"/>
<dbReference type="STRING" id="330879.Q4WHT8"/>
<dbReference type="EnsemblFungi" id="EAL87517">
    <property type="protein sequence ID" value="EAL87517"/>
    <property type="gene ID" value="AFUA_2G04230"/>
</dbReference>
<dbReference type="GeneID" id="3507123"/>
<dbReference type="KEGG" id="afm:AFUA_2G04230"/>
<dbReference type="VEuPathDB" id="FungiDB:Afu2g04230"/>
<dbReference type="eggNOG" id="KOG2843">
    <property type="taxonomic scope" value="Eukaryota"/>
</dbReference>
<dbReference type="HOGENOM" id="CLU_026207_2_0_1"/>
<dbReference type="InParanoid" id="Q4WHT8"/>
<dbReference type="OMA" id="YWTAAQQ"/>
<dbReference type="OrthoDB" id="9971669at2759"/>
<dbReference type="UniPathway" id="UPA00139">
    <property type="reaction ID" value="UER00341"/>
</dbReference>
<dbReference type="Proteomes" id="UP000002530">
    <property type="component" value="Chromosome 2"/>
</dbReference>
<dbReference type="GO" id="GO:0004334">
    <property type="term" value="F:fumarylacetoacetase activity"/>
    <property type="evidence" value="ECO:0000318"/>
    <property type="project" value="GO_Central"/>
</dbReference>
<dbReference type="GO" id="GO:0046872">
    <property type="term" value="F:metal ion binding"/>
    <property type="evidence" value="ECO:0007669"/>
    <property type="project" value="UniProtKB-KW"/>
</dbReference>
<dbReference type="GO" id="GO:1902000">
    <property type="term" value="P:homogentisate catabolic process"/>
    <property type="evidence" value="ECO:0000318"/>
    <property type="project" value="GO_Central"/>
</dbReference>
<dbReference type="GO" id="GO:0006559">
    <property type="term" value="P:L-phenylalanine catabolic process"/>
    <property type="evidence" value="ECO:0000318"/>
    <property type="project" value="GO_Central"/>
</dbReference>
<dbReference type="GO" id="GO:0006572">
    <property type="term" value="P:tyrosine catabolic process"/>
    <property type="evidence" value="ECO:0000318"/>
    <property type="project" value="GO_Central"/>
</dbReference>
<dbReference type="FunFam" id="2.30.30.230:FF:000001">
    <property type="entry name" value="Fumarylacetoacetase"/>
    <property type="match status" value="1"/>
</dbReference>
<dbReference type="FunFam" id="3.90.850.10:FF:000009">
    <property type="entry name" value="Fumarylacetoacetase"/>
    <property type="match status" value="1"/>
</dbReference>
<dbReference type="Gene3D" id="2.30.30.230">
    <property type="entry name" value="Fumarylacetoacetase, N-terminal domain"/>
    <property type="match status" value="1"/>
</dbReference>
<dbReference type="Gene3D" id="3.90.850.10">
    <property type="entry name" value="Fumarylacetoacetase-like, C-terminal domain"/>
    <property type="match status" value="1"/>
</dbReference>
<dbReference type="InterPro" id="IPR005959">
    <property type="entry name" value="Fumarylacetoacetase"/>
</dbReference>
<dbReference type="InterPro" id="IPR011234">
    <property type="entry name" value="Fumarylacetoacetase-like_C"/>
</dbReference>
<dbReference type="InterPro" id="IPR036663">
    <property type="entry name" value="Fumarylacetoacetase_C_sf"/>
</dbReference>
<dbReference type="InterPro" id="IPR015377">
    <property type="entry name" value="Fumarylacetoacetase_N"/>
</dbReference>
<dbReference type="InterPro" id="IPR036462">
    <property type="entry name" value="Fumarylacetoacetase_N_sf"/>
</dbReference>
<dbReference type="NCBIfam" id="TIGR01266">
    <property type="entry name" value="fum_ac_acetase"/>
    <property type="match status" value="1"/>
</dbReference>
<dbReference type="PANTHER" id="PTHR43069">
    <property type="entry name" value="FUMARYLACETOACETASE"/>
    <property type="match status" value="1"/>
</dbReference>
<dbReference type="PANTHER" id="PTHR43069:SF2">
    <property type="entry name" value="FUMARYLACETOACETASE"/>
    <property type="match status" value="1"/>
</dbReference>
<dbReference type="Pfam" id="PF01557">
    <property type="entry name" value="FAA_hydrolase"/>
    <property type="match status" value="1"/>
</dbReference>
<dbReference type="Pfam" id="PF09298">
    <property type="entry name" value="FAA_hydrolase_N"/>
    <property type="match status" value="1"/>
</dbReference>
<dbReference type="SUPFAM" id="SSF56529">
    <property type="entry name" value="FAH"/>
    <property type="match status" value="1"/>
</dbReference>
<dbReference type="SUPFAM" id="SSF63433">
    <property type="entry name" value="Fumarylacetoacetate hydrolase, FAH, N-terminal domain"/>
    <property type="match status" value="1"/>
</dbReference>
<comment type="function">
    <text evidence="4 5 6 9">Fumarylacetoacetase; part of the L-tyrosine degradation gene cluster that mediates the biosynthesis of the brownish pigment pyomelanin as an alternative melanin (PubMed:19028908, PubMed:22046314). The 4-hydroxyphenylpyruvate dioxygenase hppD catalyzes the conversion of 4-hydroxyphenylpyruvate to homogentisic acid (HGA) (PubMed:19028908, PubMed:22046314). The protein hmgX is crucial for this conversion and thus, probably functions as an accessory factor to mediate specific activity of hppD (PubMed:22046314). The homogentisate 1,2-dioxygenase hmgA is then involved in the cleavage of the aromatic ring of HGA and its conversion to 4-maleylacetoacetate (PubMed:19028908, PubMed:19715768). When hmgA activity is lowered by the cell wall integrity (CWI) signaling pathway, HGA accumulates and leads to the production of pyomelanin through benzoquinone acetic acid after oxidation and polymerization (PubMed:19715768). On the opposite, in non-stress conditions, both hppD and hmgA activities are balanced and HGA is degraded into 4-maleylacetoacetate (PubMed:19715768). 4-maleylacetoacetate is further converted to 4-fumarylacetoacetate by the maleylacetoacetate isomerase maiA, which is degraded into fumarate and acetoacetate by the fumarylacetoacetase fahA (Probable).</text>
</comment>
<comment type="catalytic activity">
    <reaction evidence="9">
        <text>4-fumarylacetoacetate + H2O = acetoacetate + fumarate + H(+)</text>
        <dbReference type="Rhea" id="RHEA:10244"/>
        <dbReference type="ChEBI" id="CHEBI:13705"/>
        <dbReference type="ChEBI" id="CHEBI:15377"/>
        <dbReference type="ChEBI" id="CHEBI:15378"/>
        <dbReference type="ChEBI" id="CHEBI:18034"/>
        <dbReference type="ChEBI" id="CHEBI:29806"/>
        <dbReference type="EC" id="3.7.1.2"/>
    </reaction>
    <physiologicalReaction direction="left-to-right" evidence="9">
        <dbReference type="Rhea" id="RHEA:10245"/>
    </physiologicalReaction>
</comment>
<comment type="cofactor">
    <cofactor evidence="1">
        <name>Ca(2+)</name>
        <dbReference type="ChEBI" id="CHEBI:29108"/>
    </cofactor>
</comment>
<comment type="cofactor">
    <cofactor evidence="1">
        <name>Mg(2+)</name>
        <dbReference type="ChEBI" id="CHEBI:18420"/>
    </cofactor>
</comment>
<comment type="pathway">
    <text evidence="9">Amino-acid degradation; L-phenylalanine degradation; acetoacetate and fumarate from L-phenylalanine: step 6/6.</text>
</comment>
<comment type="induction">
    <text evidence="6">Expression is positively regulated by the cluster-specific transcription factor hmgR.</text>
</comment>
<comment type="similarity">
    <text evidence="8">Belongs to the FAH family.</text>
</comment>
<gene>
    <name evidence="7" type="primary">fahA</name>
    <name type="ORF">AFUA_2G04230</name>
</gene>
<reference key="1">
    <citation type="journal article" date="2005" name="Nature">
        <title>Genomic sequence of the pathogenic and allergenic filamentous fungus Aspergillus fumigatus.</title>
        <authorList>
            <person name="Nierman W.C."/>
            <person name="Pain A."/>
            <person name="Anderson M.J."/>
            <person name="Wortman J.R."/>
            <person name="Kim H.S."/>
            <person name="Arroyo J."/>
            <person name="Berriman M."/>
            <person name="Abe K."/>
            <person name="Archer D.B."/>
            <person name="Bermejo C."/>
            <person name="Bennett J.W."/>
            <person name="Bowyer P."/>
            <person name="Chen D."/>
            <person name="Collins M."/>
            <person name="Coulsen R."/>
            <person name="Davies R."/>
            <person name="Dyer P.S."/>
            <person name="Farman M.L."/>
            <person name="Fedorova N."/>
            <person name="Fedorova N.D."/>
            <person name="Feldblyum T.V."/>
            <person name="Fischer R."/>
            <person name="Fosker N."/>
            <person name="Fraser A."/>
            <person name="Garcia J.L."/>
            <person name="Garcia M.J."/>
            <person name="Goble A."/>
            <person name="Goldman G.H."/>
            <person name="Gomi K."/>
            <person name="Griffith-Jones S."/>
            <person name="Gwilliam R."/>
            <person name="Haas B.J."/>
            <person name="Haas H."/>
            <person name="Harris D.E."/>
            <person name="Horiuchi H."/>
            <person name="Huang J."/>
            <person name="Humphray S."/>
            <person name="Jimenez J."/>
            <person name="Keller N."/>
            <person name="Khouri H."/>
            <person name="Kitamoto K."/>
            <person name="Kobayashi T."/>
            <person name="Konzack S."/>
            <person name="Kulkarni R."/>
            <person name="Kumagai T."/>
            <person name="Lafton A."/>
            <person name="Latge J.-P."/>
            <person name="Li W."/>
            <person name="Lord A."/>
            <person name="Lu C."/>
            <person name="Majoros W.H."/>
            <person name="May G.S."/>
            <person name="Miller B.L."/>
            <person name="Mohamoud Y."/>
            <person name="Molina M."/>
            <person name="Monod M."/>
            <person name="Mouyna I."/>
            <person name="Mulligan S."/>
            <person name="Murphy L.D."/>
            <person name="O'Neil S."/>
            <person name="Paulsen I."/>
            <person name="Penalva M.A."/>
            <person name="Pertea M."/>
            <person name="Price C."/>
            <person name="Pritchard B.L."/>
            <person name="Quail M.A."/>
            <person name="Rabbinowitsch E."/>
            <person name="Rawlins N."/>
            <person name="Rajandream M.A."/>
            <person name="Reichard U."/>
            <person name="Renauld H."/>
            <person name="Robson G.D."/>
            <person name="Rodriguez de Cordoba S."/>
            <person name="Rodriguez-Pena J.M."/>
            <person name="Ronning C.M."/>
            <person name="Rutter S."/>
            <person name="Salzberg S.L."/>
            <person name="Sanchez M."/>
            <person name="Sanchez-Ferrero J.C."/>
            <person name="Saunders D."/>
            <person name="Seeger K."/>
            <person name="Squares R."/>
            <person name="Squares S."/>
            <person name="Takeuchi M."/>
            <person name="Tekaia F."/>
            <person name="Turner G."/>
            <person name="Vazquez de Aldana C.R."/>
            <person name="Weidman J."/>
            <person name="White O."/>
            <person name="Woodward J.R."/>
            <person name="Yu J.-H."/>
            <person name="Fraser C.M."/>
            <person name="Galagan J.E."/>
            <person name="Asai K."/>
            <person name="Machida M."/>
            <person name="Hall N."/>
            <person name="Barrell B.G."/>
            <person name="Denning D.W."/>
        </authorList>
    </citation>
    <scope>NUCLEOTIDE SEQUENCE [LARGE SCALE GENOMIC DNA]</scope>
    <source>
        <strain>ATCC MYA-4609 / CBS 101355 / FGSC A1100 / Af293</strain>
    </source>
</reference>
<reference key="2">
    <citation type="journal article" date="2009" name="Appl. Environ. Microbiol.">
        <title>Production of pyomelanin, a second type of melanin, via the tyrosine degradation pathway in Aspergillus fumigatus.</title>
        <authorList>
            <person name="Schmaler-Ripcke J."/>
            <person name="Sugareva V."/>
            <person name="Gebhardt P."/>
            <person name="Winkler R."/>
            <person name="Kniemeyer O."/>
            <person name="Heinekamp T."/>
            <person name="Brakhage A.A."/>
        </authorList>
    </citation>
    <scope>FUNCTION</scope>
    <scope>PATHWAY</scope>
</reference>
<reference key="3">
    <citation type="journal article" date="2009" name="Fungal Genet. Biol.">
        <title>The MpkA MAP kinase module regulates cell wall integrity signaling and pyomelanin formation in Aspergillus fumigatus.</title>
        <authorList>
            <person name="Valiante V."/>
            <person name="Jain R."/>
            <person name="Heinekamp T."/>
            <person name="Brakhage A.A."/>
        </authorList>
    </citation>
    <scope>FUNCTION</scope>
</reference>
<reference key="4">
    <citation type="journal article" date="2011" name="PLoS ONE">
        <title>Pyomelanin formation in Aspergillus fumigatus requires HmgX and the transcriptional activator HmgR but is dispensable for virulence.</title>
        <authorList>
            <person name="Keller S."/>
            <person name="Macheleidt J."/>
            <person name="Scherlach K."/>
            <person name="Schmaler-Ripcke J."/>
            <person name="Jacobsen I.D."/>
            <person name="Heinekamp T."/>
            <person name="Brakhage A.A."/>
        </authorList>
    </citation>
    <scope>FUNCTION</scope>
    <scope>INDUCTION</scope>
    <scope>PATHWAY</scope>
</reference>